<feature type="chain" id="PRO_1000093582" description="Sugar fermentation stimulation protein homolog">
    <location>
        <begin position="1"/>
        <end position="236"/>
    </location>
</feature>
<gene>
    <name evidence="1" type="primary">sfsA</name>
    <name type="ordered locus">PMI0202</name>
</gene>
<proteinExistence type="inferred from homology"/>
<keyword id="KW-1185">Reference proteome</keyword>
<name>SFSA_PROMH</name>
<sequence length="236" mass="26389">MKFEQPLQSATLLKRYKRFLADVVTANGEEFTLHCANTGAMTGCATPGDTVWYSTSSNVKRKYPHSWELTQTQSGDWICINTLRANTIIADAIEAGDIPELSDYDEIRREVKYGSENSRIDILLKSNHKVDCYIEVKSVTLLDAGMGYFPDAKTERGQKHLRELTAIAKSGLRAILFYAVPHTGITQVSVAKEIDPKYDLLLKQACDAGVEILCYRINISEYDLTIGKQLPFISKG</sequence>
<dbReference type="EMBL" id="AM942759">
    <property type="protein sequence ID" value="CAR40587.1"/>
    <property type="molecule type" value="Genomic_DNA"/>
</dbReference>
<dbReference type="RefSeq" id="WP_004244997.1">
    <property type="nucleotide sequence ID" value="NC_010554.1"/>
</dbReference>
<dbReference type="SMR" id="B4EUD8"/>
<dbReference type="EnsemblBacteria" id="CAR40587">
    <property type="protein sequence ID" value="CAR40587"/>
    <property type="gene ID" value="PMI0202"/>
</dbReference>
<dbReference type="GeneID" id="6802353"/>
<dbReference type="KEGG" id="pmr:PMI0202"/>
<dbReference type="eggNOG" id="COG1489">
    <property type="taxonomic scope" value="Bacteria"/>
</dbReference>
<dbReference type="HOGENOM" id="CLU_052299_2_0_6"/>
<dbReference type="Proteomes" id="UP000008319">
    <property type="component" value="Chromosome"/>
</dbReference>
<dbReference type="GO" id="GO:0003677">
    <property type="term" value="F:DNA binding"/>
    <property type="evidence" value="ECO:0007669"/>
    <property type="project" value="InterPro"/>
</dbReference>
<dbReference type="CDD" id="cd22359">
    <property type="entry name" value="SfsA-like_bacterial"/>
    <property type="match status" value="1"/>
</dbReference>
<dbReference type="FunFam" id="2.40.50.580:FF:000001">
    <property type="entry name" value="Sugar fermentation stimulation protein A"/>
    <property type="match status" value="1"/>
</dbReference>
<dbReference type="FunFam" id="3.40.1350.60:FF:000001">
    <property type="entry name" value="Sugar fermentation stimulation protein A"/>
    <property type="match status" value="1"/>
</dbReference>
<dbReference type="Gene3D" id="2.40.50.580">
    <property type="match status" value="1"/>
</dbReference>
<dbReference type="Gene3D" id="3.40.1350.60">
    <property type="match status" value="1"/>
</dbReference>
<dbReference type="HAMAP" id="MF_00095">
    <property type="entry name" value="SfsA"/>
    <property type="match status" value="1"/>
</dbReference>
<dbReference type="InterPro" id="IPR005224">
    <property type="entry name" value="SfsA"/>
</dbReference>
<dbReference type="InterPro" id="IPR040452">
    <property type="entry name" value="SfsA_C"/>
</dbReference>
<dbReference type="InterPro" id="IPR041465">
    <property type="entry name" value="SfsA_N"/>
</dbReference>
<dbReference type="NCBIfam" id="TIGR00230">
    <property type="entry name" value="sfsA"/>
    <property type="match status" value="1"/>
</dbReference>
<dbReference type="PANTHER" id="PTHR30545">
    <property type="entry name" value="SUGAR FERMENTATION STIMULATION PROTEIN A"/>
    <property type="match status" value="1"/>
</dbReference>
<dbReference type="PANTHER" id="PTHR30545:SF2">
    <property type="entry name" value="SUGAR FERMENTATION STIMULATION PROTEIN A"/>
    <property type="match status" value="1"/>
</dbReference>
<dbReference type="Pfam" id="PF03749">
    <property type="entry name" value="SfsA"/>
    <property type="match status" value="1"/>
</dbReference>
<dbReference type="Pfam" id="PF17746">
    <property type="entry name" value="SfsA_N"/>
    <property type="match status" value="1"/>
</dbReference>
<comment type="similarity">
    <text evidence="1">Belongs to the SfsA family.</text>
</comment>
<accession>B4EUD8</accession>
<organism>
    <name type="scientific">Proteus mirabilis (strain HI4320)</name>
    <dbReference type="NCBI Taxonomy" id="529507"/>
    <lineage>
        <taxon>Bacteria</taxon>
        <taxon>Pseudomonadati</taxon>
        <taxon>Pseudomonadota</taxon>
        <taxon>Gammaproteobacteria</taxon>
        <taxon>Enterobacterales</taxon>
        <taxon>Morganellaceae</taxon>
        <taxon>Proteus</taxon>
    </lineage>
</organism>
<protein>
    <recommendedName>
        <fullName evidence="1">Sugar fermentation stimulation protein homolog</fullName>
    </recommendedName>
</protein>
<reference key="1">
    <citation type="journal article" date="2008" name="J. Bacteriol.">
        <title>Complete genome sequence of uropathogenic Proteus mirabilis, a master of both adherence and motility.</title>
        <authorList>
            <person name="Pearson M.M."/>
            <person name="Sebaihia M."/>
            <person name="Churcher C."/>
            <person name="Quail M.A."/>
            <person name="Seshasayee A.S."/>
            <person name="Luscombe N.M."/>
            <person name="Abdellah Z."/>
            <person name="Arrosmith C."/>
            <person name="Atkin B."/>
            <person name="Chillingworth T."/>
            <person name="Hauser H."/>
            <person name="Jagels K."/>
            <person name="Moule S."/>
            <person name="Mungall K."/>
            <person name="Norbertczak H."/>
            <person name="Rabbinowitsch E."/>
            <person name="Walker D."/>
            <person name="Whithead S."/>
            <person name="Thomson N.R."/>
            <person name="Rather P.N."/>
            <person name="Parkhill J."/>
            <person name="Mobley H.L.T."/>
        </authorList>
    </citation>
    <scope>NUCLEOTIDE SEQUENCE [LARGE SCALE GENOMIC DNA]</scope>
    <source>
        <strain>HI4320</strain>
    </source>
</reference>
<evidence type="ECO:0000255" key="1">
    <source>
        <dbReference type="HAMAP-Rule" id="MF_00095"/>
    </source>
</evidence>